<name>OXLA_BOTIN</name>
<keyword id="KW-0044">Antibiotic</keyword>
<keyword id="KW-0929">Antimicrobial</keyword>
<keyword id="KW-0053">Apoptosis</keyword>
<keyword id="KW-0204">Cytolysis</keyword>
<keyword id="KW-0903">Direct protein sequencing</keyword>
<keyword id="KW-1015">Disulfide bond</keyword>
<keyword id="KW-0274">FAD</keyword>
<keyword id="KW-0285">Flavoprotein</keyword>
<keyword id="KW-0325">Glycoprotein</keyword>
<keyword id="KW-0354">Hemolysis</keyword>
<keyword id="KW-1199">Hemostasis impairing toxin</keyword>
<keyword id="KW-0560">Oxidoreductase</keyword>
<keyword id="KW-0964">Secreted</keyword>
<keyword id="KW-0800">Toxin</keyword>
<sequence>ADDKNPLEECFREDDYEGFLEIAKNGLSTTSNPKRVVIVGAGMSGLAAY</sequence>
<dbReference type="EC" id="1.4.3.2" evidence="3"/>
<dbReference type="SMR" id="P0DI87"/>
<dbReference type="GO" id="GO:0005576">
    <property type="term" value="C:extracellular region"/>
    <property type="evidence" value="ECO:0007669"/>
    <property type="project" value="UniProtKB-SubCell"/>
</dbReference>
<dbReference type="GO" id="GO:0001716">
    <property type="term" value="F:L-amino-acid oxidase activity"/>
    <property type="evidence" value="ECO:0007669"/>
    <property type="project" value="UniProtKB-EC"/>
</dbReference>
<dbReference type="GO" id="GO:0090729">
    <property type="term" value="F:toxin activity"/>
    <property type="evidence" value="ECO:0007669"/>
    <property type="project" value="UniProtKB-KW"/>
</dbReference>
<dbReference type="GO" id="GO:0006915">
    <property type="term" value="P:apoptotic process"/>
    <property type="evidence" value="ECO:0007669"/>
    <property type="project" value="UniProtKB-KW"/>
</dbReference>
<dbReference type="GO" id="GO:0042742">
    <property type="term" value="P:defense response to bacterium"/>
    <property type="evidence" value="ECO:0007669"/>
    <property type="project" value="UniProtKB-KW"/>
</dbReference>
<dbReference type="GO" id="GO:0031640">
    <property type="term" value="P:killing of cells of another organism"/>
    <property type="evidence" value="ECO:0007669"/>
    <property type="project" value="UniProtKB-KW"/>
</dbReference>
<dbReference type="Gene3D" id="3.90.660.10">
    <property type="match status" value="1"/>
</dbReference>
<accession>P0DI87</accession>
<proteinExistence type="evidence at protein level"/>
<comment type="function">
    <text evidence="1 3">Catalyzes an oxidative deamination of predominantly hydrophobic and aromatic L-amino acids, thus producing hydrogen peroxide that may contribute to the diverse toxic effects of this enzyme (PubMed:17983639). Shows activity on L-Leu (PubMed:17983639). Exhibits diverse biological activities, such as hemorrhage, hemolysis, edema, antibacterial and antiparasitic activities, as well as regulation of platelet aggregation. Its effect on platelets is controversial, since it either induces aggregation or inhibits agonist-induced aggregation. These different effects are probably due to different experimental conditions (By similarity). In addition, this protein induces apoptosis and necrosis and has inhibitory effects on rat kidney function (decrease of blood flow and glomerular filtration).</text>
</comment>
<comment type="catalytic activity">
    <reaction evidence="3">
        <text>an L-alpha-amino acid + O2 + H2O = a 2-oxocarboxylate + H2O2 + NH4(+)</text>
        <dbReference type="Rhea" id="RHEA:13781"/>
        <dbReference type="ChEBI" id="CHEBI:15377"/>
        <dbReference type="ChEBI" id="CHEBI:15379"/>
        <dbReference type="ChEBI" id="CHEBI:16240"/>
        <dbReference type="ChEBI" id="CHEBI:28938"/>
        <dbReference type="ChEBI" id="CHEBI:35179"/>
        <dbReference type="ChEBI" id="CHEBI:59869"/>
        <dbReference type="EC" id="1.4.3.2"/>
    </reaction>
</comment>
<comment type="catalytic activity">
    <reaction evidence="3">
        <text>L-leucine + O2 + H2O = 4-methyl-2-oxopentanoate + H2O2 + NH4(+)</text>
        <dbReference type="Rhea" id="RHEA:60996"/>
        <dbReference type="ChEBI" id="CHEBI:15377"/>
        <dbReference type="ChEBI" id="CHEBI:15379"/>
        <dbReference type="ChEBI" id="CHEBI:16240"/>
        <dbReference type="ChEBI" id="CHEBI:17865"/>
        <dbReference type="ChEBI" id="CHEBI:28938"/>
        <dbReference type="ChEBI" id="CHEBI:57427"/>
    </reaction>
</comment>
<comment type="cofactor">
    <cofactor evidence="2">
        <name>FAD</name>
        <dbReference type="ChEBI" id="CHEBI:57692"/>
    </cofactor>
</comment>
<comment type="subunit">
    <text evidence="2">Homodimer; non-covalently linked.</text>
</comment>
<comment type="subcellular location">
    <subcellularLocation>
        <location evidence="3">Secreted</location>
    </subcellularLocation>
</comment>
<comment type="tissue specificity">
    <text evidence="6">Expressed by the venom gland.</text>
</comment>
<comment type="PTM">
    <text evidence="2">N-glycosylated.</text>
</comment>
<comment type="similarity">
    <text evidence="5">Belongs to the flavin monoamine oxidase family. FIG1 subfamily.</text>
</comment>
<organism>
    <name type="scientific">Bothrops insularis</name>
    <name type="common">Golden lancehead</name>
    <name type="synonym">Lachesis insularis</name>
    <dbReference type="NCBI Taxonomy" id="8723"/>
    <lineage>
        <taxon>Eukaryota</taxon>
        <taxon>Metazoa</taxon>
        <taxon>Chordata</taxon>
        <taxon>Craniata</taxon>
        <taxon>Vertebrata</taxon>
        <taxon>Euteleostomi</taxon>
        <taxon>Lepidosauria</taxon>
        <taxon>Squamata</taxon>
        <taxon>Bifurcata</taxon>
        <taxon>Unidentata</taxon>
        <taxon>Episquamata</taxon>
        <taxon>Toxicofera</taxon>
        <taxon>Serpentes</taxon>
        <taxon>Colubroidea</taxon>
        <taxon>Viperidae</taxon>
        <taxon>Crotalinae</taxon>
        <taxon>Bothrops</taxon>
    </lineage>
</organism>
<feature type="chain" id="PRO_0000412594" description="L-amino-acid oxidase">
    <location>
        <begin position="1"/>
        <end position="49" status="greater than"/>
    </location>
</feature>
<feature type="binding site" evidence="2">
    <location>
        <begin position="43"/>
        <end position="44"/>
    </location>
    <ligand>
        <name>FAD</name>
        <dbReference type="ChEBI" id="CHEBI:57692"/>
    </ligand>
</feature>
<feature type="disulfide bond" evidence="2">
    <location>
        <begin position="10"/>
        <end status="unknown"/>
    </location>
</feature>
<feature type="non-terminal residue" evidence="4">
    <location>
        <position position="49"/>
    </location>
</feature>
<evidence type="ECO:0000250" key="1">
    <source>
        <dbReference type="UniProtKB" id="P0CC17"/>
    </source>
</evidence>
<evidence type="ECO:0000250" key="2">
    <source>
        <dbReference type="UniProtKB" id="P81382"/>
    </source>
</evidence>
<evidence type="ECO:0000269" key="3">
    <source>
    </source>
</evidence>
<evidence type="ECO:0000303" key="4">
    <source>
    </source>
</evidence>
<evidence type="ECO:0000305" key="5"/>
<evidence type="ECO:0000305" key="6">
    <source>
    </source>
</evidence>
<protein>
    <recommendedName>
        <fullName>L-amino-acid oxidase</fullName>
        <shortName evidence="4">BiLAO</shortName>
        <shortName>LAAO</shortName>
        <ecNumber evidence="3">1.4.3.2</ecNumber>
    </recommendedName>
</protein>
<reference key="1">
    <citation type="journal article" date="2008" name="Toxicon">
        <title>Purification and biological effects of L-amino acid oxidase isolated from Bothrops insularis venom.</title>
        <authorList>
            <person name="Braga M.D."/>
            <person name="Martins A.M."/>
            <person name="Amora D.N."/>
            <person name="de Menezes D.B."/>
            <person name="Toyama M.H."/>
            <person name="Toyama D.O."/>
            <person name="Marangoni S."/>
            <person name="Alves C.D."/>
            <person name="Barbosa P.S."/>
            <person name="de Sousa Alves R."/>
            <person name="Fonteles M.C."/>
            <person name="Monteiro H.S.A."/>
        </authorList>
    </citation>
    <scope>PROTEIN SEQUENCE</scope>
    <scope>FUNCTION</scope>
    <scope>SUBCELLULAR LOCATION</scope>
    <source>
        <tissue>Venom</tissue>
    </source>
</reference>